<proteinExistence type="evidence at protein level"/>
<reference evidence="21 22" key="1">
    <citation type="journal article" date="1998" name="Proc. Natl. Acad. Sci. U.S.A.">
        <title>Nlk is a murine protein kinase related to Erk/MAP kinases and localized in the nucleus.</title>
        <authorList>
            <person name="Brott B.K."/>
            <person name="Pinsky B.A."/>
            <person name="Erikson R.L."/>
        </authorList>
    </citation>
    <scope>NUCLEOTIDE SEQUENCE [MRNA]</scope>
    <scope>FUNCTION</scope>
    <scope>ACTIVITY REGULATION</scope>
    <scope>SUBCELLULAR LOCATION</scope>
    <scope>TISSUE SPECIFICITY</scope>
    <scope>AUTOPHOSPHORYLATION</scope>
    <scope>MUTAGENESIS OF LYS-167 AND THR-298</scope>
    <source>
        <strain evidence="22">BALB/cJ</strain>
        <tissue evidence="22">Brain</tissue>
    </source>
</reference>
<reference key="2">
    <citation type="journal article" date="2009" name="PLoS Biol.">
        <title>Lineage-specific biology revealed by a finished genome assembly of the mouse.</title>
        <authorList>
            <person name="Church D.M."/>
            <person name="Goodstadt L."/>
            <person name="Hillier L.W."/>
            <person name="Zody M.C."/>
            <person name="Goldstein S."/>
            <person name="She X."/>
            <person name="Bult C.J."/>
            <person name="Agarwala R."/>
            <person name="Cherry J.L."/>
            <person name="DiCuccio M."/>
            <person name="Hlavina W."/>
            <person name="Kapustin Y."/>
            <person name="Meric P."/>
            <person name="Maglott D."/>
            <person name="Birtle Z."/>
            <person name="Marques A.C."/>
            <person name="Graves T."/>
            <person name="Zhou S."/>
            <person name="Teague B."/>
            <person name="Potamousis K."/>
            <person name="Churas C."/>
            <person name="Place M."/>
            <person name="Herschleb J."/>
            <person name="Runnheim R."/>
            <person name="Forrest D."/>
            <person name="Amos-Landgraf J."/>
            <person name="Schwartz D.C."/>
            <person name="Cheng Z."/>
            <person name="Lindblad-Toh K."/>
            <person name="Eichler E.E."/>
            <person name="Ponting C.P."/>
        </authorList>
    </citation>
    <scope>NUCLEOTIDE SEQUENCE [LARGE SCALE GENOMIC DNA]</scope>
    <source>
        <strain>C57BL/6J</strain>
    </source>
</reference>
<reference key="3">
    <citation type="journal article" date="2004" name="Genome Res.">
        <title>The status, quality, and expansion of the NIH full-length cDNA project: the Mammalian Gene Collection (MGC).</title>
        <authorList>
            <consortium name="The MGC Project Team"/>
        </authorList>
    </citation>
    <scope>NUCLEOTIDE SEQUENCE [LARGE SCALE MRNA]</scope>
    <source>
        <strain>C57BL/6J</strain>
        <strain>FVB/N</strain>
        <tissue>Brain</tissue>
        <tissue>Kidney</tissue>
    </source>
</reference>
<reference key="4">
    <citation type="journal article" date="1999" name="Nature">
        <title>The TAK1-NLK-MAPK-related pathway antagonizes signalling between beta-catenin and transcription factor TCF.</title>
        <authorList>
            <person name="Ishitani T."/>
            <person name="Ninomiya-Tsuji J."/>
            <person name="Nagai S."/>
            <person name="Nishita M."/>
            <person name="Meneghini M."/>
            <person name="Barker N."/>
            <person name="Waterman M."/>
            <person name="Bowerman B."/>
            <person name="Clevers H."/>
            <person name="Shibuya H."/>
            <person name="Matsumoto K."/>
        </authorList>
    </citation>
    <scope>FUNCTION</scope>
    <scope>AUTOPHOSPHORYLATION</scope>
    <scope>ACTIVITY REGULATION</scope>
    <scope>MUTAGENESIS OF LYS-167 AND CYS-437</scope>
</reference>
<reference evidence="21" key="5">
    <citation type="journal article" date="2001" name="Eur. J. Immunol.">
        <title>Abnormal bone marrow stroma in mice deficient for nemo-like kinase, Nlk.</title>
        <authorList>
            <person name="Kortenjann M."/>
            <person name="Nehls M."/>
            <person name="Smith A.J."/>
            <person name="Carsetti R."/>
            <person name="Schuler J."/>
            <person name="Kohler G."/>
            <person name="Boehm T."/>
        </authorList>
    </citation>
    <scope>FUNCTION</scope>
</reference>
<reference key="6">
    <citation type="journal article" date="2003" name="Mol. Cell. Biol.">
        <title>The TAK1-NLK mitogen-activated protein kinase cascade functions in the Wnt-5a/Ca(2+) pathway to antagonize Wnt/beta-catenin signaling.</title>
        <authorList>
            <person name="Ishitani T."/>
            <person name="Kishida S."/>
            <person name="Hyodo-Miura J."/>
            <person name="Ueno N."/>
            <person name="Yasuda J."/>
            <person name="Waterman M."/>
            <person name="Shibuya H."/>
            <person name="Moon R.T."/>
            <person name="Ninomiya-Tsuji J."/>
            <person name="Matsumoto K."/>
        </authorList>
    </citation>
    <scope>FUNCTION</scope>
    <scope>ACTIVITY REGULATION</scope>
</reference>
<reference key="7">
    <citation type="journal article" date="2003" name="Mol. Cell. Biol.">
        <title>Regulation of lymphoid enhancer factor 1/T-cell factor by mitogen-activated protein kinase-related Nemo-like kinase-dependent phosphorylation in Wnt/beta-catenin signaling.</title>
        <authorList>
            <person name="Ishitani T."/>
            <person name="Ninomiya-Tsuji J."/>
            <person name="Matsumoto K."/>
        </authorList>
    </citation>
    <scope>FUNCTION</scope>
    <scope>INTERACTION WITH LEF1 AND TCF7L2</scope>
    <scope>MUTAGENESIS OF LYS-167</scope>
</reference>
<reference evidence="21" key="8">
    <citation type="journal article" date="2004" name="Cancer Sci.">
        <title>Nemo-like kinase suppresses a wide range of transcription factors, including nuclear factor-kappaB.</title>
        <authorList>
            <person name="Yasuda J."/>
            <person name="Yokoo H."/>
            <person name="Yamada T."/>
            <person name="Kitabayashi I."/>
            <person name="Sekiya T."/>
            <person name="Ichikawa H."/>
        </authorList>
    </citation>
    <scope>FUNCTION</scope>
</reference>
<reference key="9">
    <citation type="journal article" date="2004" name="Genes Dev.">
        <title>Role of the TAK1-NLK-STAT3 pathway in TGF-beta-mediated mesoderm induction.</title>
        <authorList>
            <person name="Ohkawara B."/>
            <person name="Shirakabe K."/>
            <person name="Hyodo-Miura J."/>
            <person name="Matsuo R."/>
            <person name="Ueno N."/>
            <person name="Matsumoto K."/>
            <person name="Shibuya H."/>
        </authorList>
    </citation>
    <scope>FUNCTION</scope>
    <scope>CATALYTIC ACTIVITY</scope>
    <scope>INTERACTION WITH STAT3</scope>
</reference>
<reference evidence="21" key="10">
    <citation type="journal article" date="2004" name="Genes Dev.">
        <title>Wnt-1 signal induces phosphorylation and degradation of c-Myb protein via TAK1, HIPK2, and NLK.</title>
        <authorList>
            <person name="Kanei-Ishii C."/>
            <person name="Ninomiya-Tsuji J."/>
            <person name="Tanikawa J."/>
            <person name="Nomura T."/>
            <person name="Ishitani T."/>
            <person name="Kishida S."/>
            <person name="Kokura K."/>
            <person name="Kurahashi T."/>
            <person name="Ichikawa-Iwata E."/>
            <person name="Kim Y."/>
            <person name="Matsumoto K."/>
            <person name="Ishii S."/>
        </authorList>
    </citation>
    <scope>FUNCTION</scope>
    <scope>INTERACTION WITH MYB AND HIPK2</scope>
    <scope>MUTAGENESIS OF LYS-167 AND THR-298</scope>
</reference>
<reference key="11">
    <citation type="journal article" date="2004" name="J. Biol. Chem.">
        <title>Differential sensitivity of v-Myb and c-Myb to Wnt-1-induced protein degradation.</title>
        <authorList>
            <person name="Kanei-Ishii C."/>
            <person name="Nomura T."/>
            <person name="Tanikawa J."/>
            <person name="Ichikawa-Iwata E."/>
            <person name="Ishii S."/>
        </authorList>
    </citation>
    <scope>FUNCTION</scope>
    <scope>INTERACTION WITH MYB</scope>
</reference>
<reference key="12">
    <citation type="journal article" date="2005" name="Mol. Biol. Cell">
        <title>The Wnt-NLK signaling pathway inhibits A-Myb activity by inhibiting the association with coactivator CBP and methylating histone H3.</title>
        <authorList>
            <person name="Kurahashi T."/>
            <person name="Nomura T."/>
            <person name="Kanei-Ishii C."/>
            <person name="Shinkai Y."/>
            <person name="Ishii S."/>
        </authorList>
    </citation>
    <scope>FUNCTION</scope>
    <scope>ACTIVITY REGULATION</scope>
    <scope>INTERACTION WITH MYBL1 AND MYBL2</scope>
    <scope>MUTAGENESIS OF LYS-167</scope>
</reference>
<reference key="13">
    <citation type="journal article" date="2007" name="Mol. Cell. Biol.">
        <title>Nemo-like kinase-myocyte enhancer factor 2A signaling regulates anterior formation in Xenopus development.</title>
        <authorList>
            <person name="Satoh K."/>
            <person name="Ohnishi J."/>
            <person name="Sato A."/>
            <person name="Takeyama M."/>
            <person name="Iemura S."/>
            <person name="Natsume T."/>
            <person name="Shibuya H."/>
        </authorList>
    </citation>
    <scope>FUNCTION</scope>
    <scope>CATALYTIC ACTIVITY</scope>
    <scope>INTERACTION WITH MEF2A</scope>
</reference>
<reference key="14">
    <citation type="journal article" date="2007" name="Mol. Cell. Proteomics">
        <title>Qualitative and quantitative analyses of protein phosphorylation in naive and stimulated mouse synaptosomal preparations.</title>
        <authorList>
            <person name="Munton R.P."/>
            <person name="Tweedie-Cullen R."/>
            <person name="Livingstone-Zatchej M."/>
            <person name="Weinandy F."/>
            <person name="Waidelich M."/>
            <person name="Longo D."/>
            <person name="Gehrig P."/>
            <person name="Potthast F."/>
            <person name="Rutishauser D."/>
            <person name="Gerrits B."/>
            <person name="Panse C."/>
            <person name="Schlapbach R."/>
            <person name="Mansuy I.M."/>
        </authorList>
    </citation>
    <scope>IDENTIFICATION BY MASS SPECTROMETRY [LARGE SCALE ANALYSIS]</scope>
    <source>
        <tissue>Brain cortex</tissue>
    </source>
</reference>
<reference key="15">
    <citation type="journal article" date="2008" name="J. Biol. Chem.">
        <title>Fbxw7 acts as an E3 ubiquitin ligase that targets c-Myb for nemo-like kinase (NLK)-induced degradation.</title>
        <authorList>
            <person name="Kanei-Ishii C."/>
            <person name="Nomura T."/>
            <person name="Takagi T."/>
            <person name="Watanabe N."/>
            <person name="Nakayama K.I."/>
            <person name="Ishii S."/>
        </authorList>
    </citation>
    <scope>FUNCTION</scope>
    <scope>INTERACTION WITH E3 UBIQUITIN-PROTEIN LIGASE COMPLEXES</scope>
</reference>
<reference key="16">
    <citation type="journal article" date="2010" name="Cell">
        <title>A tissue-specific atlas of mouse protein phosphorylation and expression.</title>
        <authorList>
            <person name="Huttlin E.L."/>
            <person name="Jedrychowski M.P."/>
            <person name="Elias J.E."/>
            <person name="Goswami T."/>
            <person name="Rad R."/>
            <person name="Beausoleil S.A."/>
            <person name="Villen J."/>
            <person name="Haas W."/>
            <person name="Sowa M.E."/>
            <person name="Gygi S.P."/>
        </authorList>
    </citation>
    <scope>PHOSPHORYLATION [LARGE SCALE ANALYSIS] AT THR-298</scope>
    <scope>IDENTIFICATION BY MASS SPECTROMETRY [LARGE SCALE ANALYSIS]</scope>
    <source>
        <tissue>Brain</tissue>
        <tissue>Kidney</tissue>
        <tissue>Liver</tissue>
        <tissue>Lung</tissue>
    </source>
</reference>
<reference key="17">
    <citation type="journal article" date="2010" name="J. Biol. Chem.">
        <title>TAB2 scaffolds TAK1 and NLK in repressing canonical Wnt signaling.</title>
        <authorList>
            <person name="Li M."/>
            <person name="Wang H."/>
            <person name="Huang T."/>
            <person name="Wang J."/>
            <person name="Ding Y."/>
            <person name="Li Z."/>
            <person name="Zhang J."/>
            <person name="Li L."/>
        </authorList>
    </citation>
    <scope>FUNCTION</scope>
    <scope>AUTOPHOSPHORYLATION</scope>
    <scope>INTERACTION WITH MAP3K7 AND TAB2</scope>
    <scope>MUTAGENESIS OF LYS-167</scope>
</reference>
<reference key="18">
    <citation type="journal article" date="2010" name="Nat. Cell Biol.">
        <title>Nemo-like kinase suppresses Notch signalling by interfering with formation of the Notch active transcriptional complex.</title>
        <authorList>
            <person name="Ishitani T."/>
            <person name="Hirao T."/>
            <person name="Suzuki M."/>
            <person name="Isoda M."/>
            <person name="Ishitani S."/>
            <person name="Harigaya K."/>
            <person name="Kitagawa M."/>
            <person name="Matsumoto K."/>
            <person name="Itoh M."/>
        </authorList>
    </citation>
    <scope>FUNCTION</scope>
    <scope>INTERACTION WITH NOTCH1</scope>
    <scope>MUTAGENESIS OF LYS-167</scope>
</reference>
<reference key="19">
    <citation type="journal article" date="2011" name="Antioxid. Redox Signal.">
        <title>Oxidative stress-dependent regulation of Forkhead box O4 activity by nemo-like kinase.</title>
        <authorList>
            <person name="Szypowska A.A."/>
            <person name="de Ruiter H."/>
            <person name="Meijer L.A.T."/>
            <person name="Smits L.M.M."/>
            <person name="Burgering B.M.T."/>
        </authorList>
    </citation>
    <scope>FUNCTION</scope>
    <scope>INTERACTION WITH FOXO4</scope>
</reference>
<reference key="20">
    <citation type="journal article" date="2011" name="Mol. Biol. Cell">
        <title>Homodimerization of Nemo-like kinase is essential for activation and nuclear localization.</title>
        <authorList>
            <person name="Ishitani S."/>
            <person name="Inaba K."/>
            <person name="Matsumoto K."/>
            <person name="Ishitani T."/>
        </authorList>
    </citation>
    <scope>FUNCTION</scope>
    <scope>AUTOPHOSPHORYLATION</scope>
    <scope>ACTIVITY REGULATION</scope>
    <scope>HOMODIMERIZATION</scope>
    <scope>SUBCELLULAR LOCATION</scope>
    <scope>PHOSPHORYLATION AT THR-298</scope>
    <scope>MUTAGENESIS OF LYS-167; THR-298 AND CYS-437</scope>
</reference>
<organism>
    <name type="scientific">Mus musculus</name>
    <name type="common">Mouse</name>
    <dbReference type="NCBI Taxonomy" id="10090"/>
    <lineage>
        <taxon>Eukaryota</taxon>
        <taxon>Metazoa</taxon>
        <taxon>Chordata</taxon>
        <taxon>Craniata</taxon>
        <taxon>Vertebrata</taxon>
        <taxon>Euteleostomi</taxon>
        <taxon>Mammalia</taxon>
        <taxon>Eutheria</taxon>
        <taxon>Euarchontoglires</taxon>
        <taxon>Glires</taxon>
        <taxon>Rodentia</taxon>
        <taxon>Myomorpha</taxon>
        <taxon>Muroidea</taxon>
        <taxon>Muridae</taxon>
        <taxon>Murinae</taxon>
        <taxon>Mus</taxon>
        <taxon>Mus</taxon>
    </lineage>
</organism>
<feature type="chain" id="PRO_0000186337" description="Serine/threonine-protein kinase NLK">
    <location>
        <begin position="1"/>
        <end position="527"/>
    </location>
</feature>
<feature type="domain" description="Protein kinase" evidence="2">
    <location>
        <begin position="138"/>
        <end position="427"/>
    </location>
</feature>
<feature type="region of interest" description="Required for interaction with TAB2" evidence="17">
    <location>
        <begin position="1"/>
        <end position="304"/>
    </location>
</feature>
<feature type="region of interest" description="Sufficient for interaction with DAPK3" evidence="1">
    <location>
        <begin position="1"/>
        <end position="125"/>
    </location>
</feature>
<feature type="region of interest" description="Disordered" evidence="4">
    <location>
        <begin position="22"/>
        <end position="72"/>
    </location>
</feature>
<feature type="region of interest" description="Disordered" evidence="4">
    <location>
        <begin position="90"/>
        <end position="139"/>
    </location>
</feature>
<feature type="region of interest" description="Sufficient for interaction with DAPK3" evidence="1">
    <location>
        <begin position="124"/>
        <end position="416"/>
    </location>
</feature>
<feature type="region of interest" description="Required for homodimerization and kinase activation and localization to the nucleus" evidence="19">
    <location>
        <begin position="428"/>
        <end position="527"/>
    </location>
</feature>
<feature type="region of interest" description="Required for interaction with TAB2" evidence="17">
    <location>
        <begin position="434"/>
        <end position="527"/>
    </location>
</feature>
<feature type="short sequence motif" description="TQE" evidence="11 19 20">
    <location>
        <begin position="298"/>
        <end position="300"/>
    </location>
</feature>
<feature type="compositionally biased region" description="Basic residues" evidence="4">
    <location>
        <begin position="26"/>
        <end position="54"/>
    </location>
</feature>
<feature type="compositionally biased region" description="Low complexity" evidence="4">
    <location>
        <begin position="103"/>
        <end position="119"/>
    </location>
</feature>
<feature type="compositionally biased region" description="Basic residues" evidence="4">
    <location>
        <begin position="122"/>
        <end position="131"/>
    </location>
</feature>
<feature type="active site" description="Proton acceptor" evidence="2 3">
    <location>
        <position position="264"/>
    </location>
</feature>
<feature type="binding site" evidence="2">
    <location>
        <begin position="144"/>
        <end position="152"/>
    </location>
    <ligand>
        <name>ATP</name>
        <dbReference type="ChEBI" id="CHEBI:30616"/>
    </ligand>
</feature>
<feature type="binding site" evidence="21">
    <location>
        <position position="167"/>
    </location>
    <ligand>
        <name>ATP</name>
        <dbReference type="ChEBI" id="CHEBI:30616"/>
    </ligand>
</feature>
<feature type="modified residue" description="Phosphothreonine; by autocatalysis" evidence="19 23">
    <location>
        <position position="298"/>
    </location>
</feature>
<feature type="modified residue" description="Phosphoserine" evidence="1">
    <location>
        <position position="522"/>
    </location>
</feature>
<feature type="mutagenesis site" description="Abrogates kinase activity and autophosphorylation. Retains ability to homodimerize. Abrogates ability to induce ubiquitination and degradation of LEF1 and repress canonical Wnt/beta-catenin signaling. Abrogates ability to induce MYB degradation, and reduces ability to repress MYBL1 and MYBL2." evidence="5 8 11 13 16 17 19 20">
    <original>K</original>
    <variation>M</variation>
    <location>
        <position position="167"/>
    </location>
</feature>
<feature type="mutagenesis site" description="Abrogates autophosphorylation." evidence="11 19 20">
    <original>T</original>
    <variation>D</variation>
    <variation>E</variation>
    <location>
        <position position="298"/>
    </location>
</feature>
<feature type="mutagenesis site" description="Abrogates autophosphorylation. Retains ability to homodimerize. Abrogates ability to induce MYB degradation." evidence="11 19 20">
    <original>T</original>
    <variation>V</variation>
    <location>
        <position position="298"/>
    </location>
</feature>
<feature type="mutagenesis site" description="Retains kinase activity." evidence="5 19">
    <original>C</original>
    <variation>S</variation>
    <location>
        <position position="437"/>
    </location>
</feature>
<feature type="mutagenesis site" description="Abrogates homodimerization and intermolecular autophosphorylation, with consequent loss of kinase activity. Loss of nuclear localization." evidence="5 19">
    <original>C</original>
    <variation>Y</variation>
    <location>
        <position position="437"/>
    </location>
</feature>
<feature type="sequence conflict" description="In Ref. 1; AAC24499." evidence="21" ref="1">
    <original>S</original>
    <variation>P</variation>
    <location>
        <position position="69"/>
    </location>
</feature>
<sequence length="527" mass="58313">MSLCGTRANAKMMAAYNGGTSAAAAGHHHHHHHHLPHLPPPHLHHHHHPQHHLHPGSAAAVHPVQQHTSSAAAAAAAAAAAAAMLNPGQQQPYFPSPAPGQAPGPAAAAPAQVQAAAAATVKAHHHQHSHHPQQQLDIEPDRPIGYGAFGVVWSVTDPRDGKRVALKKMPNVFQNLVSCKRVFRELKMLCFFKHDNVLSALDILQPPHIDYFEEIYVVTELMQSDLHKIIVSPQPLSSDHVKVFLYQILRGLKYLHSAGILHRDIKPGNLLVNSNCVLKICDFGLARVEELDESRHMTQEVVTQYYRAPEILMGSRHYSNAIDIWSVGCIFAELLGRRILFQAQSPIQQLDLITDLLGTPSLEAMRTACEGAKAHILRGPHKQPSLPVLYTLSSQATHEAVHLLCRMLVFDPSKRISAKDALAHPYLDEGRLRYHTCMCKCCFSTSTGRVYTSDFEPVTNPKFDDTFEKNLSSVRQVKEIIHQFILEQQKGNRVPLCINPQSAAFKSFISSTVAQPSEMPPSPLVWE</sequence>
<protein>
    <recommendedName>
        <fullName>Serine/threonine-protein kinase NLK</fullName>
        <ecNumber evidence="10 14">2.7.11.24</ecNumber>
    </recommendedName>
    <alternativeName>
        <fullName>Nemo-like kinase</fullName>
    </alternativeName>
</protein>
<comment type="function">
    <text evidence="1 5 6 7 8 9 10 11 12 13 14 15 16 17 18 19 20">Serine/threonine-protein kinase that regulates a number of transcription factors with key roles in cell fate determination (PubMed:10391247, PubMed:11745377, PubMed:12482967, PubMed:12556497, PubMed:14720327, PubMed:15004007, PubMed:17785444, PubMed:18765672, PubMed:20874444, PubMed:21118996, PubMed:9448268). Positive effector of the non-canonical Wnt signaling pathway, acting downstream of WNT5A, MAP3K7/TAK1 and HIPK2 (PubMed:15004007). Negative regulator of the canonical Wnt/beta-catenin signaling pathway (PubMed:20194509). Binds to and phosphorylates TCF7L2/TCF4 and LEF1, promoting the dissociation of the TCF7L2/LEF1/beta-catenin complex from DNA, as well as the ubiquitination and subsequent proteolysis of LEF1 (PubMed:12556497). Together these effects inhibit the transcriptional activation of canonical Wnt/beta-catenin target genes (PubMed:12556497). Negative regulator of the Notch signaling pathway (PubMed:20118921). Binds to and phosphorylates NOTCH1, thereby preventing the formation of a transcriptionally active ternary complex of NOTCH1, RBPJ/RBPSUH and MAML1 (PubMed:20118921). Negative regulator of the MYB family of transcription factors (PubMed:16055500). Phosphorylation of MYB leads to its subsequent proteolysis while phosphorylation of MYBL1 and MYBL2 inhibits their interaction with the coactivator CREBBP (PubMed:15082531, PubMed:15308626, PubMed:16055500). Other transcription factors may also be inhibited by direct phosphorylation of CREBBP itself (PubMed:15082531, PubMed:15308626, PubMed:16055500). Acts downstream of IL6 and MAP3K7/TAK1 to phosphorylate STAT3, which is in turn required for activation of NLK by MAP3K7/TAK1 (PubMed:15004007). Upon IL1B stimulus, cooperates with ATF5 to activate the transactivation activity of C/EBP subfamily members (By similarity). Phosphorylates ATF5 but also stabilizes ATF5 protein levels in a kinase-independent manner (By similarity). Acts as an inhibitor of the mTORC1 complex in response to osmotic stress by mediating phosphorylation of RPTOR, thereby preventing recruitment of the mTORC1 complex to lysosomes (By similarity).</text>
</comment>
<comment type="catalytic activity">
    <reaction evidence="10 14">
        <text>L-seryl-[protein] + ATP = O-phospho-L-seryl-[protein] + ADP + H(+)</text>
        <dbReference type="Rhea" id="RHEA:17989"/>
        <dbReference type="Rhea" id="RHEA-COMP:9863"/>
        <dbReference type="Rhea" id="RHEA-COMP:11604"/>
        <dbReference type="ChEBI" id="CHEBI:15378"/>
        <dbReference type="ChEBI" id="CHEBI:29999"/>
        <dbReference type="ChEBI" id="CHEBI:30616"/>
        <dbReference type="ChEBI" id="CHEBI:83421"/>
        <dbReference type="ChEBI" id="CHEBI:456216"/>
        <dbReference type="EC" id="2.7.11.24"/>
    </reaction>
</comment>
<comment type="catalytic activity">
    <reaction evidence="10 14">
        <text>L-threonyl-[protein] + ATP = O-phospho-L-threonyl-[protein] + ADP + H(+)</text>
        <dbReference type="Rhea" id="RHEA:46608"/>
        <dbReference type="Rhea" id="RHEA-COMP:11060"/>
        <dbReference type="Rhea" id="RHEA-COMP:11605"/>
        <dbReference type="ChEBI" id="CHEBI:15378"/>
        <dbReference type="ChEBI" id="CHEBI:30013"/>
        <dbReference type="ChEBI" id="CHEBI:30616"/>
        <dbReference type="ChEBI" id="CHEBI:61977"/>
        <dbReference type="ChEBI" id="CHEBI:456216"/>
        <dbReference type="EC" id="2.7.11.24"/>
    </reaction>
</comment>
<comment type="cofactor">
    <cofactor>
        <name>Mg(2+)</name>
        <dbReference type="ChEBI" id="CHEBI:18420"/>
    </cofactor>
</comment>
<comment type="activity regulation">
    <text evidence="5 7 13 19 20">Activated by the non-canonical Wnt signaling pathway, in which WNT5A leads to activation of MAP3K7/TAK1 and HIPK2, which subsequently phosphorylates and activates this protein. Activated by dimerization and subsequent intermolecular autophosphorylation on Thr-298. Other cytokines such as IL6 may also activate this regulatory circuit.</text>
</comment>
<comment type="subunit">
    <text evidence="1 8 10 11 12 13 14 15 16 17 18 19">Homodimer. Homodimerization is required for intermolecular autophosphorylation, kinase activation and nuclear localization (PubMed:21118996). Interacts with RNF138/NARF (By similarity). Interacts with FOXO1 and FOXO3 (By similarity). Interacts with the upstream activating kinases HIPK2 and MAP3K7/TAK1. Interaction with MAP3K7/TAK1 seems to be indirect, and may be mediated by other proteins such as STAT3, TAB1 and TAB2. Interacts with and phosphorylates a number of transcription factors including FOXO4, LEF1, MYB, MYBL1, MYBL2, NOTCH1 and TCF7L2/TCF4. May interact with components of cullin-RING-based SCF (SKP1-CUL1-F-box protein) E3 ubiquitin-protein ligase complexes. Interacts with MEF2A (PubMed:12556497, PubMed:15004007, PubMed:15082531, PubMed:15308626, PubMed:16055500, PubMed:17785444, PubMed:18765672, PubMed:20118921, PubMed:20194509, PubMed:20874444). Interacts with ATF5; the interaction stabilizes ATF5 at the protein level in a kinase-independent manner (By similarity).</text>
</comment>
<comment type="interaction">
    <interactant intactId="EBI-366894">
        <id>O54949</id>
    </interactant>
    <interactant intactId="EBI-366905">
        <id>Q9QZR5</id>
        <label>Hipk2</label>
    </interactant>
    <organismsDiffer>false</organismsDiffer>
    <experiments>2</experiments>
</comment>
<comment type="subcellular location">
    <subcellularLocation>
        <location evidence="19 20">Nucleus</location>
    </subcellularLocation>
    <subcellularLocation>
        <location evidence="19">Cytoplasm</location>
    </subcellularLocation>
    <text evidence="19">Predominantly nuclear. A smaller fraction is cytoplasmic.</text>
</comment>
<comment type="tissue specificity">
    <text evidence="20">Expressed at high levels in the brain, and at lower levels in heart, kidney, lung and liver.</text>
</comment>
<comment type="domain">
    <text evidence="11 19 20">Contains a TQE activation loop motif in which autophosphorylation of the threonine residue (Thr-298) is sufficient for kinase activation. This mode of activation contrasts with that of classical MAP kinases, which contain a TXY activation loop motif in which phosphorylation of both the threonine and tyrosine residues is required for kinase activation.</text>
</comment>
<comment type="PTM">
    <text evidence="19">Phosphorylated on Thr-298. Intermolecular autophosphorylation on Thr-298 activates the enzyme.</text>
</comment>
<comment type="similarity">
    <text evidence="21">Belongs to the protein kinase superfamily. CMGC Ser/Thr protein kinase family. MAP kinase subfamily.</text>
</comment>
<comment type="sequence caution" evidence="21">
    <conflict type="erroneous initiation">
        <sequence resource="EMBL-CDS" id="AAC24499"/>
    </conflict>
    <text>Truncated N-terminus.</text>
</comment>
<evidence type="ECO:0000250" key="1">
    <source>
        <dbReference type="UniProtKB" id="Q9UBE8"/>
    </source>
</evidence>
<evidence type="ECO:0000255" key="2">
    <source>
        <dbReference type="PROSITE-ProRule" id="PRU00159"/>
    </source>
</evidence>
<evidence type="ECO:0000255" key="3">
    <source>
        <dbReference type="PROSITE-ProRule" id="PRU10027"/>
    </source>
</evidence>
<evidence type="ECO:0000256" key="4">
    <source>
        <dbReference type="SAM" id="MobiDB-lite"/>
    </source>
</evidence>
<evidence type="ECO:0000269" key="5">
    <source>
    </source>
</evidence>
<evidence type="ECO:0000269" key="6">
    <source>
    </source>
</evidence>
<evidence type="ECO:0000269" key="7">
    <source>
    </source>
</evidence>
<evidence type="ECO:0000269" key="8">
    <source>
    </source>
</evidence>
<evidence type="ECO:0000269" key="9">
    <source>
    </source>
</evidence>
<evidence type="ECO:0000269" key="10">
    <source>
    </source>
</evidence>
<evidence type="ECO:0000269" key="11">
    <source>
    </source>
</evidence>
<evidence type="ECO:0000269" key="12">
    <source>
    </source>
</evidence>
<evidence type="ECO:0000269" key="13">
    <source>
    </source>
</evidence>
<evidence type="ECO:0000269" key="14">
    <source>
    </source>
</evidence>
<evidence type="ECO:0000269" key="15">
    <source>
    </source>
</evidence>
<evidence type="ECO:0000269" key="16">
    <source>
    </source>
</evidence>
<evidence type="ECO:0000269" key="17">
    <source>
    </source>
</evidence>
<evidence type="ECO:0000269" key="18">
    <source>
    </source>
</evidence>
<evidence type="ECO:0000269" key="19">
    <source>
    </source>
</evidence>
<evidence type="ECO:0000269" key="20">
    <source>
    </source>
</evidence>
<evidence type="ECO:0000305" key="21"/>
<evidence type="ECO:0000312" key="22">
    <source>
        <dbReference type="EMBL" id="AAC24499.1"/>
    </source>
</evidence>
<evidence type="ECO:0007744" key="23">
    <source>
    </source>
</evidence>
<name>NLK_MOUSE</name>
<gene>
    <name evidence="22" type="primary">Nlk</name>
</gene>
<accession>O54949</accession>
<accession>Q5SYE6</accession>
<accession>Q6PF98</accession>
<keyword id="KW-0067">ATP-binding</keyword>
<keyword id="KW-0963">Cytoplasm</keyword>
<keyword id="KW-0418">Kinase</keyword>
<keyword id="KW-0460">Magnesium</keyword>
<keyword id="KW-0479">Metal-binding</keyword>
<keyword id="KW-0547">Nucleotide-binding</keyword>
<keyword id="KW-0539">Nucleus</keyword>
<keyword id="KW-0597">Phosphoprotein</keyword>
<keyword id="KW-1185">Reference proteome</keyword>
<keyword id="KW-0723">Serine/threonine-protein kinase</keyword>
<keyword id="KW-0804">Transcription</keyword>
<keyword id="KW-0805">Transcription regulation</keyword>
<keyword id="KW-0808">Transferase</keyword>
<keyword id="KW-0879">Wnt signaling pathway</keyword>
<dbReference type="EC" id="2.7.11.24" evidence="10 14"/>
<dbReference type="EMBL" id="AF036332">
    <property type="protein sequence ID" value="AAC24499.1"/>
    <property type="status" value="ALT_INIT"/>
    <property type="molecule type" value="mRNA"/>
</dbReference>
<dbReference type="EMBL" id="AL591177">
    <property type="status" value="NOT_ANNOTATED_CDS"/>
    <property type="molecule type" value="Genomic_DNA"/>
</dbReference>
<dbReference type="EMBL" id="AL591376">
    <property type="status" value="NOT_ANNOTATED_CDS"/>
    <property type="molecule type" value="Genomic_DNA"/>
</dbReference>
<dbReference type="EMBL" id="BC057667">
    <property type="protein sequence ID" value="AAH57667.2"/>
    <property type="molecule type" value="mRNA"/>
</dbReference>
<dbReference type="EMBL" id="BC058652">
    <property type="protein sequence ID" value="AAH58652.2"/>
    <property type="molecule type" value="mRNA"/>
</dbReference>
<dbReference type="CCDS" id="CCDS25113.2"/>
<dbReference type="RefSeq" id="NP_032728.3">
    <property type="nucleotide sequence ID" value="NM_008702.3"/>
</dbReference>
<dbReference type="SMR" id="O54949"/>
<dbReference type="BioGRID" id="201785">
    <property type="interactions" value="1"/>
</dbReference>
<dbReference type="FunCoup" id="O54949">
    <property type="interactions" value="5842"/>
</dbReference>
<dbReference type="IntAct" id="O54949">
    <property type="interactions" value="2"/>
</dbReference>
<dbReference type="STRING" id="10090.ENSMUSP00000119345"/>
<dbReference type="GlyGen" id="O54949">
    <property type="glycosylation" value="1 site, 1 O-linked glycan (1 site)"/>
</dbReference>
<dbReference type="iPTMnet" id="O54949"/>
<dbReference type="PhosphoSitePlus" id="O54949"/>
<dbReference type="PaxDb" id="10090-ENSMUSP00000119345"/>
<dbReference type="ProteomicsDB" id="293576"/>
<dbReference type="Pumba" id="O54949"/>
<dbReference type="Antibodypedia" id="13947">
    <property type="antibodies" value="379 antibodies from 38 providers"/>
</dbReference>
<dbReference type="DNASU" id="18099"/>
<dbReference type="Ensembl" id="ENSMUST00000142739.8">
    <property type="protein sequence ID" value="ENSMUSP00000119345.2"/>
    <property type="gene ID" value="ENSMUSG00000017376.16"/>
</dbReference>
<dbReference type="GeneID" id="18099"/>
<dbReference type="KEGG" id="mmu:18099"/>
<dbReference type="UCSC" id="uc007kjw.1">
    <property type="organism name" value="mouse"/>
</dbReference>
<dbReference type="AGR" id="MGI:1201387"/>
<dbReference type="CTD" id="51701"/>
<dbReference type="MGI" id="MGI:1201387">
    <property type="gene designation" value="Nlk"/>
</dbReference>
<dbReference type="VEuPathDB" id="HostDB:ENSMUSG00000017376"/>
<dbReference type="eggNOG" id="KOG0664">
    <property type="taxonomic scope" value="Eukaryota"/>
</dbReference>
<dbReference type="GeneTree" id="ENSGT00940000158363"/>
<dbReference type="HOGENOM" id="CLU_000288_133_2_1"/>
<dbReference type="InParanoid" id="O54949"/>
<dbReference type="OMA" id="QNMTHEV"/>
<dbReference type="OrthoDB" id="192887at2759"/>
<dbReference type="PhylomeDB" id="O54949"/>
<dbReference type="TreeFam" id="TF315210"/>
<dbReference type="Reactome" id="R-MMU-4086398">
    <property type="pathway name" value="Ca2+ pathway"/>
</dbReference>
<dbReference type="BioGRID-ORCS" id="18099">
    <property type="hits" value="3 hits in 78 CRISPR screens"/>
</dbReference>
<dbReference type="ChiTaRS" id="Nlk">
    <property type="organism name" value="mouse"/>
</dbReference>
<dbReference type="PRO" id="PR:O54949"/>
<dbReference type="Proteomes" id="UP000000589">
    <property type="component" value="Chromosome 11"/>
</dbReference>
<dbReference type="RNAct" id="O54949">
    <property type="molecule type" value="protein"/>
</dbReference>
<dbReference type="Bgee" id="ENSMUSG00000017376">
    <property type="expression patterns" value="Expressed in rostral migratory stream and 258 other cell types or tissues"/>
</dbReference>
<dbReference type="ExpressionAtlas" id="O54949">
    <property type="expression patterns" value="baseline and differential"/>
</dbReference>
<dbReference type="GO" id="GO:0005737">
    <property type="term" value="C:cytoplasm"/>
    <property type="evidence" value="ECO:0007669"/>
    <property type="project" value="UniProtKB-SubCell"/>
</dbReference>
<dbReference type="GO" id="GO:0005634">
    <property type="term" value="C:nucleus"/>
    <property type="evidence" value="ECO:0000314"/>
    <property type="project" value="UniProtKB"/>
</dbReference>
<dbReference type="GO" id="GO:0005524">
    <property type="term" value="F:ATP binding"/>
    <property type="evidence" value="ECO:0000314"/>
    <property type="project" value="UniProtKB"/>
</dbReference>
<dbReference type="GO" id="GO:0140297">
    <property type="term" value="F:DNA-binding transcription factor binding"/>
    <property type="evidence" value="ECO:0000250"/>
    <property type="project" value="UniProtKB"/>
</dbReference>
<dbReference type="GO" id="GO:0000287">
    <property type="term" value="F:magnesium ion binding"/>
    <property type="evidence" value="ECO:0000314"/>
    <property type="project" value="UniProtKB"/>
</dbReference>
<dbReference type="GO" id="GO:0004707">
    <property type="term" value="F:MAP kinase activity"/>
    <property type="evidence" value="ECO:0000314"/>
    <property type="project" value="UniProtKB"/>
</dbReference>
<dbReference type="GO" id="GO:0004672">
    <property type="term" value="F:protein kinase activity"/>
    <property type="evidence" value="ECO:0000314"/>
    <property type="project" value="MGI"/>
</dbReference>
<dbReference type="GO" id="GO:0106310">
    <property type="term" value="F:protein serine kinase activity"/>
    <property type="evidence" value="ECO:0007669"/>
    <property type="project" value="RHEA"/>
</dbReference>
<dbReference type="GO" id="GO:0004674">
    <property type="term" value="F:protein serine/threonine kinase activity"/>
    <property type="evidence" value="ECO:0000314"/>
    <property type="project" value="UniProtKB"/>
</dbReference>
<dbReference type="GO" id="GO:0042169">
    <property type="term" value="F:SH2 domain binding"/>
    <property type="evidence" value="ECO:0000353"/>
    <property type="project" value="UniProtKB"/>
</dbReference>
<dbReference type="GO" id="GO:0031625">
    <property type="term" value="F:ubiquitin protein ligase binding"/>
    <property type="evidence" value="ECO:0000250"/>
    <property type="project" value="UniProtKB"/>
</dbReference>
<dbReference type="GO" id="GO:0071470">
    <property type="term" value="P:cellular response to osmotic stress"/>
    <property type="evidence" value="ECO:0007669"/>
    <property type="project" value="Ensembl"/>
</dbReference>
<dbReference type="GO" id="GO:0035556">
    <property type="term" value="P:intracellular signal transduction"/>
    <property type="evidence" value="ECO:0000314"/>
    <property type="project" value="UniProtKB"/>
</dbReference>
<dbReference type="GO" id="GO:1904262">
    <property type="term" value="P:negative regulation of TORC1 signaling"/>
    <property type="evidence" value="ECO:0000250"/>
    <property type="project" value="UniProtKB"/>
</dbReference>
<dbReference type="GO" id="GO:0030178">
    <property type="term" value="P:negative regulation of Wnt signaling pathway"/>
    <property type="evidence" value="ECO:0000315"/>
    <property type="project" value="UniProtKB"/>
</dbReference>
<dbReference type="GO" id="GO:0018107">
    <property type="term" value="P:peptidyl-threonine phosphorylation"/>
    <property type="evidence" value="ECO:0000314"/>
    <property type="project" value="UniProtKB"/>
</dbReference>
<dbReference type="GO" id="GO:1904894">
    <property type="term" value="P:positive regulation of receptor signaling pathway via STAT"/>
    <property type="evidence" value="ECO:0000314"/>
    <property type="project" value="UniProtKB"/>
</dbReference>
<dbReference type="GO" id="GO:0006468">
    <property type="term" value="P:protein phosphorylation"/>
    <property type="evidence" value="ECO:0000314"/>
    <property type="project" value="UniProtKB"/>
</dbReference>
<dbReference type="GO" id="GO:0050821">
    <property type="term" value="P:protein stabilization"/>
    <property type="evidence" value="ECO:0000250"/>
    <property type="project" value="UniProtKB"/>
</dbReference>
<dbReference type="GO" id="GO:0006355">
    <property type="term" value="P:regulation of DNA-templated transcription"/>
    <property type="evidence" value="ECO:0000315"/>
    <property type="project" value="UniProtKB"/>
</dbReference>
<dbReference type="GO" id="GO:0007179">
    <property type="term" value="P:transforming growth factor beta receptor signaling pathway"/>
    <property type="evidence" value="ECO:0000250"/>
    <property type="project" value="UniProtKB"/>
</dbReference>
<dbReference type="GO" id="GO:0016055">
    <property type="term" value="P:Wnt signaling pathway"/>
    <property type="evidence" value="ECO:0007669"/>
    <property type="project" value="UniProtKB-KW"/>
</dbReference>
<dbReference type="CDD" id="cd07853">
    <property type="entry name" value="STKc_NLK"/>
    <property type="match status" value="1"/>
</dbReference>
<dbReference type="FunFam" id="1.10.510.10:FF:000162">
    <property type="entry name" value="Mitogen-activated protein kinase"/>
    <property type="match status" value="1"/>
</dbReference>
<dbReference type="FunFam" id="3.30.200.20:FF:000164">
    <property type="entry name" value="Mitogen-activated protein kinase"/>
    <property type="match status" value="1"/>
</dbReference>
<dbReference type="Gene3D" id="3.30.200.20">
    <property type="entry name" value="Phosphorylase Kinase, domain 1"/>
    <property type="match status" value="1"/>
</dbReference>
<dbReference type="Gene3D" id="1.10.510.10">
    <property type="entry name" value="Transferase(Phosphotransferase) domain 1"/>
    <property type="match status" value="1"/>
</dbReference>
<dbReference type="InterPro" id="IPR011009">
    <property type="entry name" value="Kinase-like_dom_sf"/>
</dbReference>
<dbReference type="InterPro" id="IPR050117">
    <property type="entry name" value="MAP_kinase"/>
</dbReference>
<dbReference type="InterPro" id="IPR003527">
    <property type="entry name" value="MAP_kinase_CS"/>
</dbReference>
<dbReference type="InterPro" id="IPR000719">
    <property type="entry name" value="Prot_kinase_dom"/>
</dbReference>
<dbReference type="InterPro" id="IPR017441">
    <property type="entry name" value="Protein_kinase_ATP_BS"/>
</dbReference>
<dbReference type="InterPro" id="IPR008271">
    <property type="entry name" value="Ser/Thr_kinase_AS"/>
</dbReference>
<dbReference type="PANTHER" id="PTHR24055">
    <property type="entry name" value="MITOGEN-ACTIVATED PROTEIN KINASE"/>
    <property type="match status" value="1"/>
</dbReference>
<dbReference type="Pfam" id="PF00069">
    <property type="entry name" value="Pkinase"/>
    <property type="match status" value="1"/>
</dbReference>
<dbReference type="SMART" id="SM00220">
    <property type="entry name" value="S_TKc"/>
    <property type="match status" value="1"/>
</dbReference>
<dbReference type="SUPFAM" id="SSF56112">
    <property type="entry name" value="Protein kinase-like (PK-like)"/>
    <property type="match status" value="1"/>
</dbReference>
<dbReference type="PROSITE" id="PS01351">
    <property type="entry name" value="MAPK"/>
    <property type="match status" value="1"/>
</dbReference>
<dbReference type="PROSITE" id="PS00107">
    <property type="entry name" value="PROTEIN_KINASE_ATP"/>
    <property type="match status" value="1"/>
</dbReference>
<dbReference type="PROSITE" id="PS50011">
    <property type="entry name" value="PROTEIN_KINASE_DOM"/>
    <property type="match status" value="1"/>
</dbReference>
<dbReference type="PROSITE" id="PS00108">
    <property type="entry name" value="PROTEIN_KINASE_ST"/>
    <property type="match status" value="1"/>
</dbReference>